<proteinExistence type="inferred from homology"/>
<evidence type="ECO:0000255" key="1">
    <source>
        <dbReference type="HAMAP-Rule" id="MF_00332"/>
    </source>
</evidence>
<evidence type="ECO:0000256" key="2">
    <source>
        <dbReference type="SAM" id="MobiDB-lite"/>
    </source>
</evidence>
<protein>
    <recommendedName>
        <fullName evidence="1">Chaperone protein DnaK</fullName>
    </recommendedName>
    <alternativeName>
        <fullName evidence="1">HSP70</fullName>
    </alternativeName>
    <alternativeName>
        <fullName evidence="1">Heat shock 70 kDa protein</fullName>
    </alternativeName>
    <alternativeName>
        <fullName evidence="1">Heat shock protein 70</fullName>
    </alternativeName>
</protein>
<accession>A8IPT1</accession>
<dbReference type="EMBL" id="AP009384">
    <property type="protein sequence ID" value="BAF86688.1"/>
    <property type="molecule type" value="Genomic_DNA"/>
</dbReference>
<dbReference type="SMR" id="A8IPT1"/>
<dbReference type="STRING" id="438753.AZC_0690"/>
<dbReference type="KEGG" id="azc:AZC_0690"/>
<dbReference type="eggNOG" id="COG0443">
    <property type="taxonomic scope" value="Bacteria"/>
</dbReference>
<dbReference type="HOGENOM" id="CLU_005965_2_1_5"/>
<dbReference type="Proteomes" id="UP000000270">
    <property type="component" value="Chromosome"/>
</dbReference>
<dbReference type="GO" id="GO:0005524">
    <property type="term" value="F:ATP binding"/>
    <property type="evidence" value="ECO:0007669"/>
    <property type="project" value="UniProtKB-UniRule"/>
</dbReference>
<dbReference type="GO" id="GO:0140662">
    <property type="term" value="F:ATP-dependent protein folding chaperone"/>
    <property type="evidence" value="ECO:0007669"/>
    <property type="project" value="InterPro"/>
</dbReference>
<dbReference type="GO" id="GO:0051082">
    <property type="term" value="F:unfolded protein binding"/>
    <property type="evidence" value="ECO:0007669"/>
    <property type="project" value="InterPro"/>
</dbReference>
<dbReference type="CDD" id="cd10234">
    <property type="entry name" value="ASKHA_NBD_HSP70_DnaK-like"/>
    <property type="match status" value="1"/>
</dbReference>
<dbReference type="FunFam" id="2.60.34.10:FF:000014">
    <property type="entry name" value="Chaperone protein DnaK HSP70"/>
    <property type="match status" value="1"/>
</dbReference>
<dbReference type="FunFam" id="3.30.420.40:FF:000020">
    <property type="entry name" value="Chaperone protein HscA homolog"/>
    <property type="match status" value="1"/>
</dbReference>
<dbReference type="FunFam" id="1.20.1270.10:FF:000001">
    <property type="entry name" value="Molecular chaperone DnaK"/>
    <property type="match status" value="1"/>
</dbReference>
<dbReference type="FunFam" id="3.30.420.40:FF:000004">
    <property type="entry name" value="Molecular chaperone DnaK"/>
    <property type="match status" value="1"/>
</dbReference>
<dbReference type="FunFam" id="3.90.640.10:FF:000003">
    <property type="entry name" value="Molecular chaperone DnaK"/>
    <property type="match status" value="1"/>
</dbReference>
<dbReference type="Gene3D" id="1.20.1270.10">
    <property type="match status" value="1"/>
</dbReference>
<dbReference type="Gene3D" id="3.30.420.40">
    <property type="match status" value="2"/>
</dbReference>
<dbReference type="Gene3D" id="3.90.640.10">
    <property type="entry name" value="Actin, Chain A, domain 4"/>
    <property type="match status" value="1"/>
</dbReference>
<dbReference type="Gene3D" id="2.60.34.10">
    <property type="entry name" value="Substrate Binding Domain Of DNAk, Chain A, domain 1"/>
    <property type="match status" value="1"/>
</dbReference>
<dbReference type="HAMAP" id="MF_00332">
    <property type="entry name" value="DnaK"/>
    <property type="match status" value="1"/>
</dbReference>
<dbReference type="InterPro" id="IPR043129">
    <property type="entry name" value="ATPase_NBD"/>
</dbReference>
<dbReference type="InterPro" id="IPR012725">
    <property type="entry name" value="Chaperone_DnaK"/>
</dbReference>
<dbReference type="InterPro" id="IPR018181">
    <property type="entry name" value="Heat_shock_70_CS"/>
</dbReference>
<dbReference type="InterPro" id="IPR029048">
    <property type="entry name" value="HSP70_C_sf"/>
</dbReference>
<dbReference type="InterPro" id="IPR029047">
    <property type="entry name" value="HSP70_peptide-bd_sf"/>
</dbReference>
<dbReference type="InterPro" id="IPR013126">
    <property type="entry name" value="Hsp_70_fam"/>
</dbReference>
<dbReference type="NCBIfam" id="NF001413">
    <property type="entry name" value="PRK00290.1"/>
    <property type="match status" value="1"/>
</dbReference>
<dbReference type="NCBIfam" id="NF003520">
    <property type="entry name" value="PRK05183.1"/>
    <property type="match status" value="1"/>
</dbReference>
<dbReference type="NCBIfam" id="TIGR02350">
    <property type="entry name" value="prok_dnaK"/>
    <property type="match status" value="1"/>
</dbReference>
<dbReference type="PANTHER" id="PTHR19375">
    <property type="entry name" value="HEAT SHOCK PROTEIN 70KDA"/>
    <property type="match status" value="1"/>
</dbReference>
<dbReference type="Pfam" id="PF00012">
    <property type="entry name" value="HSP70"/>
    <property type="match status" value="1"/>
</dbReference>
<dbReference type="PRINTS" id="PR00301">
    <property type="entry name" value="HEATSHOCK70"/>
</dbReference>
<dbReference type="SUPFAM" id="SSF53067">
    <property type="entry name" value="Actin-like ATPase domain"/>
    <property type="match status" value="2"/>
</dbReference>
<dbReference type="SUPFAM" id="SSF100934">
    <property type="entry name" value="Heat shock protein 70kD (HSP70), C-terminal subdomain"/>
    <property type="match status" value="1"/>
</dbReference>
<dbReference type="SUPFAM" id="SSF100920">
    <property type="entry name" value="Heat shock protein 70kD (HSP70), peptide-binding domain"/>
    <property type="match status" value="1"/>
</dbReference>
<dbReference type="PROSITE" id="PS00297">
    <property type="entry name" value="HSP70_1"/>
    <property type="match status" value="1"/>
</dbReference>
<dbReference type="PROSITE" id="PS00329">
    <property type="entry name" value="HSP70_2"/>
    <property type="match status" value="1"/>
</dbReference>
<dbReference type="PROSITE" id="PS01036">
    <property type="entry name" value="HSP70_3"/>
    <property type="match status" value="1"/>
</dbReference>
<sequence>MSKIIGIDLGTTNSCVAVMEGASPKVIENAEGARTTPSIVAFTEDGERLVGQPAKRQGVTNPERTFFAVKRLIGRRYDDPTVEKDKKLVPYKVVRADNGDAWVESDGKKYSPSQISAFILQKMKETAESFLGEKVEKAVITVPAYFNDAQRQATKDAGRIAGLEVLRIINEPTAAALAYGLDKKNSGTIAVYDLGGGTFDVSVLEIGDGVFEVKSTNGDTFLGGEDFDMRLVNYLADEFKKEQGIDLRNDKLALQRLKEAAEKAKIELSSATQTEINLPFITADASGPKHLTMKLTRAKFEALVEDLIQRTMEPCRLALKDAGLSAGQIDEVVLVGGMTRMPKVQEMVKQFFGKEPHKGVNPDEVVAIGAAIQAGVLQGDVKDVLLLDVTPLSLGIETLGGVFTRLIDRNTTIPTKKSQVFSTAEDGQTAVTIRVFQGEREMAADNKILGQFDLVGIPPAPRGVPQIEVTFDIDANGIVQVSAKDKGTGKEQQIRIQASGGLNDADIEKMVKDAESHAADDKKRRALAEAKNHGEALVHSTEKALSEHGDKVGAAEKGAIESALGELKTALTTEDAEAIQAKTQALAQASLKLGEAMYSAQQGGEQPGAAKKDDVVDAEFTEVDDDKKKSA</sequence>
<comment type="function">
    <text evidence="1">Acts as a chaperone.</text>
</comment>
<comment type="induction">
    <text evidence="1">By stress conditions e.g. heat shock.</text>
</comment>
<comment type="similarity">
    <text evidence="1">Belongs to the heat shock protein 70 family.</text>
</comment>
<keyword id="KW-0067">ATP-binding</keyword>
<keyword id="KW-0143">Chaperone</keyword>
<keyword id="KW-0547">Nucleotide-binding</keyword>
<keyword id="KW-0597">Phosphoprotein</keyword>
<keyword id="KW-1185">Reference proteome</keyword>
<keyword id="KW-0346">Stress response</keyword>
<gene>
    <name evidence="1" type="primary">dnaK</name>
    <name type="ordered locus">AZC_0690</name>
</gene>
<reference key="1">
    <citation type="submission" date="2007-04" db="EMBL/GenBank/DDBJ databases">
        <title>Complete genome sequence of the nitrogen-fixing bacterium Azorhizobium caulinodans ORS571.</title>
        <authorList>
            <person name="Lee K.B."/>
            <person name="Backer P.D."/>
            <person name="Aono T."/>
            <person name="Liu C.T."/>
            <person name="Suzuki S."/>
            <person name="Suzuki T."/>
            <person name="Kaneko T."/>
            <person name="Yamada M."/>
            <person name="Tabata S."/>
            <person name="Kupfer D.M."/>
            <person name="Najar F.Z."/>
            <person name="Wiley G.B."/>
            <person name="Roe B."/>
            <person name="Binnewies T."/>
            <person name="Ussery D."/>
            <person name="Vereecke D."/>
            <person name="Gevers D."/>
            <person name="Holsters M."/>
            <person name="Oyaizu H."/>
        </authorList>
    </citation>
    <scope>NUCLEOTIDE SEQUENCE [LARGE SCALE GENOMIC DNA]</scope>
    <source>
        <strain>ATCC 43989 / DSM 5975 / JCM 20966 / LMG 6465 / NBRC 14845 / NCIMB 13405 / ORS 571</strain>
    </source>
</reference>
<organism>
    <name type="scientific">Azorhizobium caulinodans (strain ATCC 43989 / DSM 5975 / JCM 20966 / LMG 6465 / NBRC 14845 / NCIMB 13405 / ORS 571)</name>
    <dbReference type="NCBI Taxonomy" id="438753"/>
    <lineage>
        <taxon>Bacteria</taxon>
        <taxon>Pseudomonadati</taxon>
        <taxon>Pseudomonadota</taxon>
        <taxon>Alphaproteobacteria</taxon>
        <taxon>Hyphomicrobiales</taxon>
        <taxon>Xanthobacteraceae</taxon>
        <taxon>Azorhizobium</taxon>
    </lineage>
</organism>
<name>DNAK_AZOC5</name>
<feature type="chain" id="PRO_1000072032" description="Chaperone protein DnaK">
    <location>
        <begin position="1"/>
        <end position="631"/>
    </location>
</feature>
<feature type="region of interest" description="Disordered" evidence="2">
    <location>
        <begin position="598"/>
        <end position="631"/>
    </location>
</feature>
<feature type="modified residue" description="Phosphothreonine; by autocatalysis" evidence="1">
    <location>
        <position position="198"/>
    </location>
</feature>